<accession>Q1C8M2</accession>
<dbReference type="EMBL" id="CP000308">
    <property type="protein sequence ID" value="ABG13200.1"/>
    <property type="molecule type" value="Genomic_DNA"/>
</dbReference>
<dbReference type="RefSeq" id="WP_002211166.1">
    <property type="nucleotide sequence ID" value="NZ_CP009906.1"/>
</dbReference>
<dbReference type="SMR" id="Q1C8M2"/>
<dbReference type="GeneID" id="57976726"/>
<dbReference type="KEGG" id="ypa:YPA_1233"/>
<dbReference type="Proteomes" id="UP000001971">
    <property type="component" value="Chromosome"/>
</dbReference>
<dbReference type="GO" id="GO:0042597">
    <property type="term" value="C:periplasmic space"/>
    <property type="evidence" value="ECO:0007669"/>
    <property type="project" value="UniProtKB-SubCell"/>
</dbReference>
<dbReference type="CDD" id="cd04203">
    <property type="entry name" value="Cupredoxin_like_3"/>
    <property type="match status" value="1"/>
</dbReference>
<dbReference type="CDD" id="cd14656">
    <property type="entry name" value="Imelysin-like_EfeO"/>
    <property type="match status" value="1"/>
</dbReference>
<dbReference type="Gene3D" id="2.60.40.420">
    <property type="entry name" value="Cupredoxins - blue copper proteins"/>
    <property type="match status" value="1"/>
</dbReference>
<dbReference type="Gene3D" id="1.20.1420.20">
    <property type="entry name" value="M75 peptidase, HXXE motif"/>
    <property type="match status" value="1"/>
</dbReference>
<dbReference type="InterPro" id="IPR008972">
    <property type="entry name" value="Cupredoxin"/>
</dbReference>
<dbReference type="InterPro" id="IPR050894">
    <property type="entry name" value="EfeM/EfeO_iron_uptake"/>
</dbReference>
<dbReference type="InterPro" id="IPR028096">
    <property type="entry name" value="EfeO_Cupredoxin"/>
</dbReference>
<dbReference type="InterPro" id="IPR018976">
    <property type="entry name" value="Imelysin-like"/>
</dbReference>
<dbReference type="InterPro" id="IPR034981">
    <property type="entry name" value="Imelysin-like_EfeO/Algp7"/>
</dbReference>
<dbReference type="InterPro" id="IPR038352">
    <property type="entry name" value="Imelysin_sf"/>
</dbReference>
<dbReference type="InterPro" id="IPR053377">
    <property type="entry name" value="Iron_uptake_EfeM/EfeO"/>
</dbReference>
<dbReference type="NCBIfam" id="NF041757">
    <property type="entry name" value="EfeO"/>
    <property type="match status" value="1"/>
</dbReference>
<dbReference type="NCBIfam" id="NF007697">
    <property type="entry name" value="PRK10378.1"/>
    <property type="match status" value="1"/>
</dbReference>
<dbReference type="PANTHER" id="PTHR39192">
    <property type="entry name" value="IRON UPTAKE SYSTEM COMPONENT EFEO"/>
    <property type="match status" value="1"/>
</dbReference>
<dbReference type="PANTHER" id="PTHR39192:SF1">
    <property type="entry name" value="IRON UPTAKE SYSTEM COMPONENT EFEO"/>
    <property type="match status" value="1"/>
</dbReference>
<dbReference type="Pfam" id="PF13473">
    <property type="entry name" value="Cupredoxin_1"/>
    <property type="match status" value="1"/>
</dbReference>
<dbReference type="Pfam" id="PF09375">
    <property type="entry name" value="Peptidase_M75"/>
    <property type="match status" value="1"/>
</dbReference>
<dbReference type="SUPFAM" id="SSF49503">
    <property type="entry name" value="Cupredoxins"/>
    <property type="match status" value="1"/>
</dbReference>
<proteinExistence type="inferred from homology"/>
<feature type="signal peptide" evidence="2">
    <location>
        <begin position="1"/>
        <end position="27"/>
    </location>
</feature>
<feature type="chain" id="PRO_5000115908" description="Iron uptake system component EfeO">
    <location>
        <begin position="28"/>
        <end position="376"/>
    </location>
</feature>
<name>EFEO_YERPA</name>
<evidence type="ECO:0000250" key="1"/>
<evidence type="ECO:0000255" key="2"/>
<evidence type="ECO:0000305" key="3"/>
<sequence length="376" mass="41353">MSIWFFRRTALHAALLSLPVFAISAQAADIQQVKITVNDKQCEPMALTVPAGKTQFIVHNVSQKGLEWEILKGVMVVEERENIAPGFTQKMTANLEPGEYDMTCGLLSNPKGKLTVTVAAGEQAPVKPDAMALVGPIAEYKVYVTQEVAQLVSQTKAFTDAVKAGDLALARKLYAPTRQHYERIEPIAELFSDLDGSIDAREDDFEQKSADPKFTGFHRLEKILFGDNTTKGADKFADLLYQDTLELQKRIAGLTFAPNKVVGGAAGLIEEVAASKISGEEDRYSRTDLWDFQANVDGAQKIVNLLRPLLEKADKPLLQKIDANFNTVDSVLAKYRTKEGYESYEKLTDADRNAMKGPITALAEDLAQLRGVLGLD</sequence>
<reference key="1">
    <citation type="journal article" date="2006" name="J. Bacteriol.">
        <title>Complete genome sequence of Yersinia pestis strains Antiqua and Nepal516: evidence of gene reduction in an emerging pathogen.</title>
        <authorList>
            <person name="Chain P.S.G."/>
            <person name="Hu P."/>
            <person name="Malfatti S.A."/>
            <person name="Radnedge L."/>
            <person name="Larimer F."/>
            <person name="Vergez L.M."/>
            <person name="Worsham P."/>
            <person name="Chu M.C."/>
            <person name="Andersen G.L."/>
        </authorList>
    </citation>
    <scope>NUCLEOTIDE SEQUENCE [LARGE SCALE GENOMIC DNA]</scope>
    <source>
        <strain>Antiqua</strain>
    </source>
</reference>
<gene>
    <name type="primary">efeO</name>
    <name type="ordered locus">YPA_1233</name>
</gene>
<keyword id="KW-0574">Periplasm</keyword>
<keyword id="KW-0732">Signal</keyword>
<comment type="function">
    <text evidence="1">Involved in Fe(2+) uptake. Could be an iron-binding and/or electron-transfer component (By similarity).</text>
</comment>
<comment type="subunit">
    <text evidence="1">Monomer. Part of a ferrous iron transporter composed of EfeU, EfeO and EfeB (By similarity).</text>
</comment>
<comment type="subcellular location">
    <subcellularLocation>
        <location evidence="1">Periplasm</location>
    </subcellularLocation>
</comment>
<comment type="similarity">
    <text evidence="3">Belongs to the EfeM/EfeO family.</text>
</comment>
<protein>
    <recommendedName>
        <fullName>Iron uptake system component EfeO</fullName>
    </recommendedName>
</protein>
<organism>
    <name type="scientific">Yersinia pestis bv. Antiqua (strain Antiqua)</name>
    <dbReference type="NCBI Taxonomy" id="360102"/>
    <lineage>
        <taxon>Bacteria</taxon>
        <taxon>Pseudomonadati</taxon>
        <taxon>Pseudomonadota</taxon>
        <taxon>Gammaproteobacteria</taxon>
        <taxon>Enterobacterales</taxon>
        <taxon>Yersiniaceae</taxon>
        <taxon>Yersinia</taxon>
    </lineage>
</organism>